<evidence type="ECO:0000255" key="1">
    <source>
        <dbReference type="HAMAP-Rule" id="MF_01358"/>
    </source>
</evidence>
<evidence type="ECO:0000305" key="2"/>
<keyword id="KW-0997">Cell inner membrane</keyword>
<keyword id="KW-1003">Cell membrane</keyword>
<keyword id="KW-0472">Membrane</keyword>
<keyword id="KW-0520">NAD</keyword>
<keyword id="KW-0874">Quinone</keyword>
<keyword id="KW-1278">Translocase</keyword>
<keyword id="KW-0813">Transport</keyword>
<keyword id="KW-0830">Ubiquinone</keyword>
<accession>Q92ID8</accession>
<gene>
    <name evidence="1" type="primary">nuoD</name>
    <name type="ordered locus">RC0482</name>
</gene>
<name>NUOD_RICCN</name>
<comment type="function">
    <text evidence="1">NDH-1 shuttles electrons from NADH, via FMN and iron-sulfur (Fe-S) centers, to quinones in the respiratory chain. The immediate electron acceptor for the enzyme in this species is believed to be ubiquinone. Couples the redox reaction to proton translocation (for every two electrons transferred, four hydrogen ions are translocated across the cytoplasmic membrane), and thus conserves the redox energy in a proton gradient.</text>
</comment>
<comment type="catalytic activity">
    <reaction evidence="1">
        <text>a quinone + NADH + 5 H(+)(in) = a quinol + NAD(+) + 4 H(+)(out)</text>
        <dbReference type="Rhea" id="RHEA:57888"/>
        <dbReference type="ChEBI" id="CHEBI:15378"/>
        <dbReference type="ChEBI" id="CHEBI:24646"/>
        <dbReference type="ChEBI" id="CHEBI:57540"/>
        <dbReference type="ChEBI" id="CHEBI:57945"/>
        <dbReference type="ChEBI" id="CHEBI:132124"/>
    </reaction>
</comment>
<comment type="subunit">
    <text evidence="1">NDH-1 is composed of 14 different subunits. Subunits NuoB, C, D, E, F, and G constitute the peripheral sector of the complex.</text>
</comment>
<comment type="subcellular location">
    <subcellularLocation>
        <location evidence="1">Cell inner membrane</location>
        <topology evidence="1">Peripheral membrane protein</topology>
        <orientation evidence="1">Cytoplasmic side</orientation>
    </subcellularLocation>
</comment>
<comment type="similarity">
    <text evidence="1">Belongs to the complex I 49 kDa subunit family.</text>
</comment>
<comment type="sequence caution" evidence="2">
    <conflict type="erroneous initiation">
        <sequence resource="EMBL-CDS" id="AAL03020"/>
    </conflict>
</comment>
<feature type="chain" id="PRO_0000287863" description="NADH-quinone oxidoreductase subunit D">
    <location>
        <begin position="1"/>
        <end position="391"/>
    </location>
</feature>
<proteinExistence type="inferred from homology"/>
<protein>
    <recommendedName>
        <fullName evidence="1">NADH-quinone oxidoreductase subunit D</fullName>
        <ecNumber evidence="1">7.1.1.-</ecNumber>
    </recommendedName>
    <alternativeName>
        <fullName evidence="1">NADH dehydrogenase I subunit D</fullName>
    </alternativeName>
    <alternativeName>
        <fullName evidence="1">NDH-1 subunit D</fullName>
    </alternativeName>
</protein>
<sequence>MTNNTKTITLNIGPQHPATHGVLRLILEMDGEVVNNADPHIGLLHRGTEKLIEHKTYLQAIPYFDRLDYVSPMCQEHAFALAVESLLECEVPRRAQFIRVLFSELTRILNHTLNIGSQALDIGATTPLLWLFEEREKIMEFYEHVSGSRMHSNYFRPGGVAADLPEGLLEDIDKFIEQFPPKLHDIESLLNENRLWKQRLVDIGVASQKEAMDWGFSGPMLRGSGIAWDLRKSNPYDVYDEMDFKVPIGKNGDCYDRYFVRMLEMYESIKIIKQCIEKMPKGAIKTDDPKLTPPTRAKMKESMEAMIHHFKLYTEGYDVPAGETYKAVEAPKGEFGVYLYSQGGNRPYRCRIKAPGFAHLQGLDFMSKGHLMADVITIIATLDIVFGEIDR</sequence>
<dbReference type="EC" id="7.1.1.-" evidence="1"/>
<dbReference type="EMBL" id="AE006914">
    <property type="protein sequence ID" value="AAL03020.1"/>
    <property type="status" value="ALT_INIT"/>
    <property type="molecule type" value="Genomic_DNA"/>
</dbReference>
<dbReference type="PIR" id="B97760">
    <property type="entry name" value="B97760"/>
</dbReference>
<dbReference type="RefSeq" id="WP_010977124.1">
    <property type="nucleotide sequence ID" value="NC_003103.1"/>
</dbReference>
<dbReference type="SMR" id="Q92ID8"/>
<dbReference type="GeneID" id="928705"/>
<dbReference type="KEGG" id="rco:RC0482"/>
<dbReference type="PATRIC" id="fig|272944.4.peg.553"/>
<dbReference type="HOGENOM" id="CLU_015134_1_2_5"/>
<dbReference type="Proteomes" id="UP000000816">
    <property type="component" value="Chromosome"/>
</dbReference>
<dbReference type="GO" id="GO:0005886">
    <property type="term" value="C:plasma membrane"/>
    <property type="evidence" value="ECO:0007669"/>
    <property type="project" value="UniProtKB-SubCell"/>
</dbReference>
<dbReference type="GO" id="GO:0051287">
    <property type="term" value="F:NAD binding"/>
    <property type="evidence" value="ECO:0007669"/>
    <property type="project" value="InterPro"/>
</dbReference>
<dbReference type="GO" id="GO:0050136">
    <property type="term" value="F:NADH:ubiquinone reductase (non-electrogenic) activity"/>
    <property type="evidence" value="ECO:0007669"/>
    <property type="project" value="UniProtKB-UniRule"/>
</dbReference>
<dbReference type="GO" id="GO:0048038">
    <property type="term" value="F:quinone binding"/>
    <property type="evidence" value="ECO:0007669"/>
    <property type="project" value="UniProtKB-KW"/>
</dbReference>
<dbReference type="FunFam" id="1.10.645.10:FF:000005">
    <property type="entry name" value="NADH-quinone oxidoreductase subunit D"/>
    <property type="match status" value="1"/>
</dbReference>
<dbReference type="Gene3D" id="1.10.645.10">
    <property type="entry name" value="Cytochrome-c3 Hydrogenase, chain B"/>
    <property type="match status" value="1"/>
</dbReference>
<dbReference type="HAMAP" id="MF_01358">
    <property type="entry name" value="NDH1_NuoD"/>
    <property type="match status" value="1"/>
</dbReference>
<dbReference type="InterPro" id="IPR001135">
    <property type="entry name" value="NADH_Q_OxRdtase_suD"/>
</dbReference>
<dbReference type="InterPro" id="IPR014029">
    <property type="entry name" value="NADH_UbQ_OxRdtase_49kDa_CS"/>
</dbReference>
<dbReference type="InterPro" id="IPR022885">
    <property type="entry name" value="NDH1_su_D/H"/>
</dbReference>
<dbReference type="InterPro" id="IPR029014">
    <property type="entry name" value="NiFe-Hase_large"/>
</dbReference>
<dbReference type="NCBIfam" id="TIGR01962">
    <property type="entry name" value="NuoD"/>
    <property type="match status" value="1"/>
</dbReference>
<dbReference type="NCBIfam" id="NF004739">
    <property type="entry name" value="PRK06075.1"/>
    <property type="match status" value="1"/>
</dbReference>
<dbReference type="PANTHER" id="PTHR11993:SF10">
    <property type="entry name" value="NADH DEHYDROGENASE [UBIQUINONE] IRON-SULFUR PROTEIN 2, MITOCHONDRIAL"/>
    <property type="match status" value="1"/>
</dbReference>
<dbReference type="PANTHER" id="PTHR11993">
    <property type="entry name" value="NADH-UBIQUINONE OXIDOREDUCTASE 49 KDA SUBUNIT"/>
    <property type="match status" value="1"/>
</dbReference>
<dbReference type="Pfam" id="PF00346">
    <property type="entry name" value="Complex1_49kDa"/>
    <property type="match status" value="1"/>
</dbReference>
<dbReference type="SUPFAM" id="SSF56762">
    <property type="entry name" value="HydB/Nqo4-like"/>
    <property type="match status" value="1"/>
</dbReference>
<dbReference type="PROSITE" id="PS00535">
    <property type="entry name" value="COMPLEX1_49K"/>
    <property type="match status" value="1"/>
</dbReference>
<reference key="1">
    <citation type="journal article" date="2001" name="Science">
        <title>Mechanisms of evolution in Rickettsia conorii and R. prowazekii.</title>
        <authorList>
            <person name="Ogata H."/>
            <person name="Audic S."/>
            <person name="Renesto-Audiffren P."/>
            <person name="Fournier P.-E."/>
            <person name="Barbe V."/>
            <person name="Samson D."/>
            <person name="Roux V."/>
            <person name="Cossart P."/>
            <person name="Weissenbach J."/>
            <person name="Claverie J.-M."/>
            <person name="Raoult D."/>
        </authorList>
    </citation>
    <scope>NUCLEOTIDE SEQUENCE [LARGE SCALE GENOMIC DNA]</scope>
    <source>
        <strain>ATCC VR-613 / Malish 7</strain>
    </source>
</reference>
<organism>
    <name type="scientific">Rickettsia conorii (strain ATCC VR-613 / Malish 7)</name>
    <dbReference type="NCBI Taxonomy" id="272944"/>
    <lineage>
        <taxon>Bacteria</taxon>
        <taxon>Pseudomonadati</taxon>
        <taxon>Pseudomonadota</taxon>
        <taxon>Alphaproteobacteria</taxon>
        <taxon>Rickettsiales</taxon>
        <taxon>Rickettsiaceae</taxon>
        <taxon>Rickettsieae</taxon>
        <taxon>Rickettsia</taxon>
        <taxon>spotted fever group</taxon>
    </lineage>
</organism>